<protein>
    <recommendedName>
        <fullName>Zinc finger protein 404</fullName>
    </recommendedName>
</protein>
<comment type="function">
    <text evidence="1">May be involved in transcriptional regulation.</text>
</comment>
<comment type="interaction">
    <interactant intactId="EBI-10241626">
        <id>Q494X3</id>
    </interactant>
    <interactant intactId="EBI-748397">
        <id>P50222</id>
        <label>MEOX2</label>
    </interactant>
    <organismsDiffer>false</organismsDiffer>
    <experiments>3</experiments>
</comment>
<comment type="subcellular location">
    <subcellularLocation>
        <location evidence="5">Nucleus</location>
    </subcellularLocation>
</comment>
<comment type="similarity">
    <text evidence="5">Belongs to the krueppel C2H2-type zinc-finger protein family.</text>
</comment>
<sequence>MARVPLTFSDVAIDFSQEEWEYLNSDQRDLYRDVMLENYTNLVSLDFNFTTESNKLSSEKRNYEVNAYHQETWKRNKTFNLMRFIFRTDPQYTIEFGRQQRPKVGCFSQMIFKKHKSLPLHKRNNTREKSYECKEYKKGFRKYLHLTEHLRDHTGVIPYECNECGKAFVVFQHFIRHRKIHTDLKPYECNGCEKAFRFYSQLIQHQIIHTGMKPYECKQCGKAFRRHSHLTEHQKIHVGLKPFECKECGETFRLYRHMCLHQKIHHGVKPYKCKECGKAFGHRSSLYQHKKIHSGEKPYKCEQCEKAFVRSYLLVEHQRSHTGEKPHECMECGKAFGKGSSLLKHKRIHSSEKLYDCKDCGKAFCRGSQLTQHQRIHTGEKPHECKECGKTFKLHSYLIQHQIIHTDLKPYECKQCGKAFSRVGDLKTHQSIHAGEKPYECKECGKTFRLNSQLIYHQTIHTGLKPYVCKECKKAFRSISGLSQHKRIHTGEKPYECKECDKAFNRSDRLTQHETIHTGVKPQKCKECGKAFSHCYQLSQHQRFHHGERLLM</sequence>
<feature type="chain" id="PRO_0000305136" description="Zinc finger protein 404">
    <location>
        <begin position="1"/>
        <end position="552"/>
    </location>
</feature>
<feature type="domain" description="KRAB" evidence="3">
    <location>
        <begin position="6"/>
        <end position="78"/>
    </location>
</feature>
<feature type="zinc finger region" description="C2H2-type 1; degenerate" evidence="2">
    <location>
        <begin position="131"/>
        <end position="153"/>
    </location>
</feature>
<feature type="zinc finger region" description="C2H2-type 2" evidence="2">
    <location>
        <begin position="159"/>
        <end position="181"/>
    </location>
</feature>
<feature type="zinc finger region" description="C2H2-type 3" evidence="2">
    <location>
        <begin position="187"/>
        <end position="209"/>
    </location>
</feature>
<feature type="zinc finger region" description="C2H2-type 4" evidence="2">
    <location>
        <begin position="215"/>
        <end position="237"/>
    </location>
</feature>
<feature type="zinc finger region" description="C2H2-type 5" evidence="2">
    <location>
        <begin position="243"/>
        <end position="265"/>
    </location>
</feature>
<feature type="zinc finger region" description="C2H2-type 6" evidence="2">
    <location>
        <begin position="271"/>
        <end position="293"/>
    </location>
</feature>
<feature type="zinc finger region" description="C2H2-type 7" evidence="2">
    <location>
        <begin position="299"/>
        <end position="321"/>
    </location>
</feature>
<feature type="zinc finger region" description="C2H2-type 8" evidence="2">
    <location>
        <begin position="327"/>
        <end position="349"/>
    </location>
</feature>
<feature type="zinc finger region" description="C2H2-type 9" evidence="2">
    <location>
        <begin position="355"/>
        <end position="377"/>
    </location>
</feature>
<feature type="zinc finger region" description="C2H2-type 10" evidence="2">
    <location>
        <begin position="383"/>
        <end position="405"/>
    </location>
</feature>
<feature type="zinc finger region" description="C2H2-type 11" evidence="2">
    <location>
        <begin position="411"/>
        <end position="433"/>
    </location>
</feature>
<feature type="zinc finger region" description="C2H2-type 12" evidence="2">
    <location>
        <begin position="439"/>
        <end position="461"/>
    </location>
</feature>
<feature type="zinc finger region" description="C2H2-type 13" evidence="2">
    <location>
        <begin position="467"/>
        <end position="489"/>
    </location>
</feature>
<feature type="zinc finger region" description="C2H2-type 14" evidence="2">
    <location>
        <begin position="495"/>
        <end position="517"/>
    </location>
</feature>
<feature type="zinc finger region" description="C2H2-type 15" evidence="2">
    <location>
        <begin position="523"/>
        <end position="545"/>
    </location>
</feature>
<feature type="sequence variant" id="VAR_057419" description="In dbSNP:rs12977303." evidence="4">
    <original>H</original>
    <variation>Y</variation>
    <location>
        <position position="233"/>
    </location>
</feature>
<feature type="sequence variant" id="VAR_070605" description="In dbSNP:rs239942." evidence="4">
    <original>G</original>
    <variation>S</variation>
    <location>
        <position position="337"/>
    </location>
</feature>
<dbReference type="EMBL" id="AC006213">
    <property type="status" value="NOT_ANNOTATED_CDS"/>
    <property type="molecule type" value="Genomic_DNA"/>
</dbReference>
<dbReference type="EMBL" id="AC011508">
    <property type="status" value="NOT_ANNOTATED_CDS"/>
    <property type="molecule type" value="Genomic_DNA"/>
</dbReference>
<dbReference type="EMBL" id="BC101332">
    <property type="protein sequence ID" value="AAI01333.1"/>
    <property type="molecule type" value="mRNA"/>
</dbReference>
<dbReference type="EMBL" id="BC101333">
    <property type="protein sequence ID" value="AAI01334.1"/>
    <property type="molecule type" value="mRNA"/>
</dbReference>
<dbReference type="CCDS" id="CCDS59394.1"/>
<dbReference type="RefSeq" id="NP_001028891.2">
    <property type="nucleotide sequence ID" value="NM_001033719.3"/>
</dbReference>
<dbReference type="SMR" id="Q494X3"/>
<dbReference type="BioGRID" id="131207">
    <property type="interactions" value="2"/>
</dbReference>
<dbReference type="FunCoup" id="Q494X3">
    <property type="interactions" value="2"/>
</dbReference>
<dbReference type="IntAct" id="Q494X3">
    <property type="interactions" value="1"/>
</dbReference>
<dbReference type="STRING" id="9606.ENSP00000466051"/>
<dbReference type="GlyGen" id="Q494X3">
    <property type="glycosylation" value="1 site, 1 O-linked glycan (1 site)"/>
</dbReference>
<dbReference type="iPTMnet" id="Q494X3"/>
<dbReference type="PhosphoSitePlus" id="Q494X3"/>
<dbReference type="BioMuta" id="ZNF404"/>
<dbReference type="DMDM" id="121943242"/>
<dbReference type="jPOST" id="Q494X3"/>
<dbReference type="MassIVE" id="Q494X3"/>
<dbReference type="PaxDb" id="9606-ENSP00000466051"/>
<dbReference type="PeptideAtlas" id="Q494X3"/>
<dbReference type="Antibodypedia" id="31137">
    <property type="antibodies" value="55 antibodies from 15 providers"/>
</dbReference>
<dbReference type="DNASU" id="342908"/>
<dbReference type="Ensembl" id="ENST00000587539.2">
    <property type="protein sequence ID" value="ENSP00000466051.1"/>
    <property type="gene ID" value="ENSG00000176222.10"/>
</dbReference>
<dbReference type="GeneID" id="342908"/>
<dbReference type="KEGG" id="hsa:342908"/>
<dbReference type="MANE-Select" id="ENST00000587539.2">
    <property type="protein sequence ID" value="ENSP00000466051.1"/>
    <property type="RefSeq nucleotide sequence ID" value="NM_001033719.3"/>
    <property type="RefSeq protein sequence ID" value="NP_001028891.2"/>
</dbReference>
<dbReference type="UCSC" id="uc002oxs.7">
    <property type="organism name" value="human"/>
</dbReference>
<dbReference type="AGR" id="HGNC:19417"/>
<dbReference type="CTD" id="342908"/>
<dbReference type="DisGeNET" id="342908"/>
<dbReference type="GeneCards" id="ZNF404"/>
<dbReference type="HGNC" id="HGNC:19417">
    <property type="gene designation" value="ZNF404"/>
</dbReference>
<dbReference type="HPA" id="ENSG00000176222">
    <property type="expression patterns" value="Low tissue specificity"/>
</dbReference>
<dbReference type="neXtProt" id="NX_Q494X3"/>
<dbReference type="OpenTargets" id="ENSG00000176222"/>
<dbReference type="PharmGKB" id="PA134880927"/>
<dbReference type="VEuPathDB" id="HostDB:ENSG00000176222"/>
<dbReference type="eggNOG" id="KOG1721">
    <property type="taxonomic scope" value="Eukaryota"/>
</dbReference>
<dbReference type="GeneTree" id="ENSGT00940000164159"/>
<dbReference type="InParanoid" id="Q494X3"/>
<dbReference type="OMA" id="QMIFRKH"/>
<dbReference type="OrthoDB" id="427030at2759"/>
<dbReference type="PAN-GO" id="Q494X3">
    <property type="GO annotations" value="3 GO annotations based on evolutionary models"/>
</dbReference>
<dbReference type="PhylomeDB" id="Q494X3"/>
<dbReference type="TreeFam" id="TF350856"/>
<dbReference type="PathwayCommons" id="Q494X3"/>
<dbReference type="SignaLink" id="Q494X3"/>
<dbReference type="BioGRID-ORCS" id="342908">
    <property type="hits" value="32 hits in 1140 CRISPR screens"/>
</dbReference>
<dbReference type="GenomeRNAi" id="342908"/>
<dbReference type="Pharos" id="Q494X3">
    <property type="development level" value="Tdark"/>
</dbReference>
<dbReference type="PRO" id="PR:Q494X3"/>
<dbReference type="Proteomes" id="UP000005640">
    <property type="component" value="Chromosome 19"/>
</dbReference>
<dbReference type="RNAct" id="Q494X3">
    <property type="molecule type" value="protein"/>
</dbReference>
<dbReference type="Bgee" id="ENSG00000176222">
    <property type="expression patterns" value="Expressed in right uterine tube and 130 other cell types or tissues"/>
</dbReference>
<dbReference type="ExpressionAtlas" id="Q494X3">
    <property type="expression patterns" value="baseline and differential"/>
</dbReference>
<dbReference type="GO" id="GO:0005634">
    <property type="term" value="C:nucleus"/>
    <property type="evidence" value="ECO:0000318"/>
    <property type="project" value="GO_Central"/>
</dbReference>
<dbReference type="GO" id="GO:0000981">
    <property type="term" value="F:DNA-binding transcription factor activity, RNA polymerase II-specific"/>
    <property type="evidence" value="ECO:0000318"/>
    <property type="project" value="GO_Central"/>
</dbReference>
<dbReference type="GO" id="GO:0000977">
    <property type="term" value="F:RNA polymerase II transcription regulatory region sequence-specific DNA binding"/>
    <property type="evidence" value="ECO:0000318"/>
    <property type="project" value="GO_Central"/>
</dbReference>
<dbReference type="GO" id="GO:0008270">
    <property type="term" value="F:zinc ion binding"/>
    <property type="evidence" value="ECO:0007669"/>
    <property type="project" value="UniProtKB-KW"/>
</dbReference>
<dbReference type="GO" id="GO:0006357">
    <property type="term" value="P:regulation of transcription by RNA polymerase II"/>
    <property type="evidence" value="ECO:0000318"/>
    <property type="project" value="GO_Central"/>
</dbReference>
<dbReference type="CDD" id="cd07765">
    <property type="entry name" value="KRAB_A-box"/>
    <property type="match status" value="1"/>
</dbReference>
<dbReference type="FunFam" id="3.30.160.60:FF:000020">
    <property type="entry name" value="Zinc finger protein 14 homolog"/>
    <property type="match status" value="2"/>
</dbReference>
<dbReference type="FunFam" id="3.30.160.60:FF:000053">
    <property type="entry name" value="zinc finger protein 182 isoform X1"/>
    <property type="match status" value="1"/>
</dbReference>
<dbReference type="FunFam" id="3.30.160.60:FF:000295">
    <property type="entry name" value="zinc finger protein 19"/>
    <property type="match status" value="2"/>
</dbReference>
<dbReference type="FunFam" id="3.30.160.60:FF:001336">
    <property type="entry name" value="Zinc finger protein 334"/>
    <property type="match status" value="1"/>
</dbReference>
<dbReference type="FunFam" id="3.30.160.60:FF:002343">
    <property type="entry name" value="Zinc finger protein 33A"/>
    <property type="match status" value="1"/>
</dbReference>
<dbReference type="FunFam" id="3.30.160.60:FF:001498">
    <property type="entry name" value="Zinc finger protein 404"/>
    <property type="match status" value="1"/>
</dbReference>
<dbReference type="FunFam" id="3.30.160.60:FF:002177">
    <property type="entry name" value="Zinc finger protein 404"/>
    <property type="match status" value="1"/>
</dbReference>
<dbReference type="FunFam" id="3.30.160.60:FF:002390">
    <property type="entry name" value="zinc finger protein 404 isoform X2"/>
    <property type="match status" value="1"/>
</dbReference>
<dbReference type="FunFam" id="3.30.160.60:FF:000060">
    <property type="entry name" value="zinc finger protein 436"/>
    <property type="match status" value="1"/>
</dbReference>
<dbReference type="FunFam" id="3.30.160.60:FF:002254">
    <property type="entry name" value="Zinc finger protein 540"/>
    <property type="match status" value="1"/>
</dbReference>
<dbReference type="FunFam" id="3.30.160.60:FF:000051">
    <property type="entry name" value="zinc finger protein 585A"/>
    <property type="match status" value="1"/>
</dbReference>
<dbReference type="FunFam" id="3.30.160.60:FF:000416">
    <property type="entry name" value="zinc finger protein 879 isoform X1"/>
    <property type="match status" value="1"/>
</dbReference>
<dbReference type="Gene3D" id="6.10.140.140">
    <property type="match status" value="1"/>
</dbReference>
<dbReference type="Gene3D" id="3.30.160.60">
    <property type="entry name" value="Classic Zinc Finger"/>
    <property type="match status" value="15"/>
</dbReference>
<dbReference type="InterPro" id="IPR001909">
    <property type="entry name" value="KRAB"/>
</dbReference>
<dbReference type="InterPro" id="IPR036051">
    <property type="entry name" value="KRAB_dom_sf"/>
</dbReference>
<dbReference type="InterPro" id="IPR050331">
    <property type="entry name" value="Zinc_finger"/>
</dbReference>
<dbReference type="InterPro" id="IPR036236">
    <property type="entry name" value="Znf_C2H2_sf"/>
</dbReference>
<dbReference type="InterPro" id="IPR013087">
    <property type="entry name" value="Znf_C2H2_type"/>
</dbReference>
<dbReference type="PANTHER" id="PTHR16515">
    <property type="entry name" value="PR DOMAIN ZINC FINGER PROTEIN"/>
    <property type="match status" value="1"/>
</dbReference>
<dbReference type="PANTHER" id="PTHR16515:SF57">
    <property type="entry name" value="ZINC FINGER PROTEIN 154-LIKE"/>
    <property type="match status" value="1"/>
</dbReference>
<dbReference type="Pfam" id="PF01352">
    <property type="entry name" value="KRAB"/>
    <property type="match status" value="1"/>
</dbReference>
<dbReference type="Pfam" id="PF00096">
    <property type="entry name" value="zf-C2H2"/>
    <property type="match status" value="12"/>
</dbReference>
<dbReference type="Pfam" id="PF13912">
    <property type="entry name" value="zf-C2H2_6"/>
    <property type="match status" value="1"/>
</dbReference>
<dbReference type="SMART" id="SM00349">
    <property type="entry name" value="KRAB"/>
    <property type="match status" value="1"/>
</dbReference>
<dbReference type="SMART" id="SM00355">
    <property type="entry name" value="ZnF_C2H2"/>
    <property type="match status" value="15"/>
</dbReference>
<dbReference type="SUPFAM" id="SSF57667">
    <property type="entry name" value="beta-beta-alpha zinc fingers"/>
    <property type="match status" value="8"/>
</dbReference>
<dbReference type="SUPFAM" id="SSF109640">
    <property type="entry name" value="KRAB domain (Kruppel-associated box)"/>
    <property type="match status" value="1"/>
</dbReference>
<dbReference type="PROSITE" id="PS50805">
    <property type="entry name" value="KRAB"/>
    <property type="match status" value="1"/>
</dbReference>
<dbReference type="PROSITE" id="PS00028">
    <property type="entry name" value="ZINC_FINGER_C2H2_1"/>
    <property type="match status" value="14"/>
</dbReference>
<dbReference type="PROSITE" id="PS50157">
    <property type="entry name" value="ZINC_FINGER_C2H2_2"/>
    <property type="match status" value="15"/>
</dbReference>
<proteinExistence type="evidence at protein level"/>
<gene>
    <name type="primary">ZNF404</name>
</gene>
<reference key="1">
    <citation type="journal article" date="2004" name="Nature">
        <title>The DNA sequence and biology of human chromosome 19.</title>
        <authorList>
            <person name="Grimwood J."/>
            <person name="Gordon L.A."/>
            <person name="Olsen A.S."/>
            <person name="Terry A."/>
            <person name="Schmutz J."/>
            <person name="Lamerdin J.E."/>
            <person name="Hellsten U."/>
            <person name="Goodstein D."/>
            <person name="Couronne O."/>
            <person name="Tran-Gyamfi M."/>
            <person name="Aerts A."/>
            <person name="Altherr M."/>
            <person name="Ashworth L."/>
            <person name="Bajorek E."/>
            <person name="Black S."/>
            <person name="Branscomb E."/>
            <person name="Caenepeel S."/>
            <person name="Carrano A.V."/>
            <person name="Caoile C."/>
            <person name="Chan Y.M."/>
            <person name="Christensen M."/>
            <person name="Cleland C.A."/>
            <person name="Copeland A."/>
            <person name="Dalin E."/>
            <person name="Dehal P."/>
            <person name="Denys M."/>
            <person name="Detter J.C."/>
            <person name="Escobar J."/>
            <person name="Flowers D."/>
            <person name="Fotopulos D."/>
            <person name="Garcia C."/>
            <person name="Georgescu A.M."/>
            <person name="Glavina T."/>
            <person name="Gomez M."/>
            <person name="Gonzales E."/>
            <person name="Groza M."/>
            <person name="Hammon N."/>
            <person name="Hawkins T."/>
            <person name="Haydu L."/>
            <person name="Ho I."/>
            <person name="Huang W."/>
            <person name="Israni S."/>
            <person name="Jett J."/>
            <person name="Kadner K."/>
            <person name="Kimball H."/>
            <person name="Kobayashi A."/>
            <person name="Larionov V."/>
            <person name="Leem S.-H."/>
            <person name="Lopez F."/>
            <person name="Lou Y."/>
            <person name="Lowry S."/>
            <person name="Malfatti S."/>
            <person name="Martinez D."/>
            <person name="McCready P.M."/>
            <person name="Medina C."/>
            <person name="Morgan J."/>
            <person name="Nelson K."/>
            <person name="Nolan M."/>
            <person name="Ovcharenko I."/>
            <person name="Pitluck S."/>
            <person name="Pollard M."/>
            <person name="Popkie A.P."/>
            <person name="Predki P."/>
            <person name="Quan G."/>
            <person name="Ramirez L."/>
            <person name="Rash S."/>
            <person name="Retterer J."/>
            <person name="Rodriguez A."/>
            <person name="Rogers S."/>
            <person name="Salamov A."/>
            <person name="Salazar A."/>
            <person name="She X."/>
            <person name="Smith D."/>
            <person name="Slezak T."/>
            <person name="Solovyev V."/>
            <person name="Thayer N."/>
            <person name="Tice H."/>
            <person name="Tsai M."/>
            <person name="Ustaszewska A."/>
            <person name="Vo N."/>
            <person name="Wagner M."/>
            <person name="Wheeler J."/>
            <person name="Wu K."/>
            <person name="Xie G."/>
            <person name="Yang J."/>
            <person name="Dubchak I."/>
            <person name="Furey T.S."/>
            <person name="DeJong P."/>
            <person name="Dickson M."/>
            <person name="Gordon D."/>
            <person name="Eichler E.E."/>
            <person name="Pennacchio L.A."/>
            <person name="Richardson P."/>
            <person name="Stubbs L."/>
            <person name="Rokhsar D.S."/>
            <person name="Myers R.M."/>
            <person name="Rubin E.M."/>
            <person name="Lucas S.M."/>
        </authorList>
    </citation>
    <scope>NUCLEOTIDE SEQUENCE [LARGE SCALE GENOMIC DNA]</scope>
</reference>
<reference key="2">
    <citation type="journal article" date="2004" name="Genome Res.">
        <title>The status, quality, and expansion of the NIH full-length cDNA project: the Mammalian Gene Collection (MGC).</title>
        <authorList>
            <consortium name="The MGC Project Team"/>
        </authorList>
    </citation>
    <scope>NUCLEOTIDE SEQUENCE [LARGE SCALE MRNA]</scope>
    <scope>VARIANTS TYR-233 AND SER-337</scope>
</reference>
<keyword id="KW-0238">DNA-binding</keyword>
<keyword id="KW-0479">Metal-binding</keyword>
<keyword id="KW-0539">Nucleus</keyword>
<keyword id="KW-1267">Proteomics identification</keyword>
<keyword id="KW-1185">Reference proteome</keyword>
<keyword id="KW-0677">Repeat</keyword>
<keyword id="KW-0804">Transcription</keyword>
<keyword id="KW-0805">Transcription regulation</keyword>
<keyword id="KW-0862">Zinc</keyword>
<keyword id="KW-0863">Zinc-finger</keyword>
<accession>Q494X3</accession>
<accession>A4FU30</accession>
<accession>K7ELF2</accession>
<name>ZN404_HUMAN</name>
<organism>
    <name type="scientific">Homo sapiens</name>
    <name type="common">Human</name>
    <dbReference type="NCBI Taxonomy" id="9606"/>
    <lineage>
        <taxon>Eukaryota</taxon>
        <taxon>Metazoa</taxon>
        <taxon>Chordata</taxon>
        <taxon>Craniata</taxon>
        <taxon>Vertebrata</taxon>
        <taxon>Euteleostomi</taxon>
        <taxon>Mammalia</taxon>
        <taxon>Eutheria</taxon>
        <taxon>Euarchontoglires</taxon>
        <taxon>Primates</taxon>
        <taxon>Haplorrhini</taxon>
        <taxon>Catarrhini</taxon>
        <taxon>Hominidae</taxon>
        <taxon>Homo</taxon>
    </lineage>
</organism>
<evidence type="ECO:0000250" key="1"/>
<evidence type="ECO:0000255" key="2">
    <source>
        <dbReference type="PROSITE-ProRule" id="PRU00042"/>
    </source>
</evidence>
<evidence type="ECO:0000255" key="3">
    <source>
        <dbReference type="PROSITE-ProRule" id="PRU00119"/>
    </source>
</evidence>
<evidence type="ECO:0000269" key="4">
    <source>
    </source>
</evidence>
<evidence type="ECO:0000305" key="5"/>